<proteinExistence type="inferred from homology"/>
<dbReference type="EC" id="4.2.3.4" evidence="1"/>
<dbReference type="EMBL" id="BX640423">
    <property type="protein sequence ID" value="CAE39813.1"/>
    <property type="molecule type" value="Genomic_DNA"/>
</dbReference>
<dbReference type="RefSeq" id="WP_003806948.1">
    <property type="nucleotide sequence ID" value="NC_002928.3"/>
</dbReference>
<dbReference type="SMR" id="Q7W2B6"/>
<dbReference type="GeneID" id="93206303"/>
<dbReference type="KEGG" id="bpa:BPP0072"/>
<dbReference type="HOGENOM" id="CLU_001201_0_2_4"/>
<dbReference type="UniPathway" id="UPA00053">
    <property type="reaction ID" value="UER00085"/>
</dbReference>
<dbReference type="Proteomes" id="UP000001421">
    <property type="component" value="Chromosome"/>
</dbReference>
<dbReference type="GO" id="GO:0005737">
    <property type="term" value="C:cytoplasm"/>
    <property type="evidence" value="ECO:0007669"/>
    <property type="project" value="UniProtKB-SubCell"/>
</dbReference>
<dbReference type="GO" id="GO:0003856">
    <property type="term" value="F:3-dehydroquinate synthase activity"/>
    <property type="evidence" value="ECO:0007669"/>
    <property type="project" value="UniProtKB-UniRule"/>
</dbReference>
<dbReference type="GO" id="GO:0046872">
    <property type="term" value="F:metal ion binding"/>
    <property type="evidence" value="ECO:0007669"/>
    <property type="project" value="UniProtKB-KW"/>
</dbReference>
<dbReference type="GO" id="GO:0000166">
    <property type="term" value="F:nucleotide binding"/>
    <property type="evidence" value="ECO:0007669"/>
    <property type="project" value="UniProtKB-KW"/>
</dbReference>
<dbReference type="GO" id="GO:0008652">
    <property type="term" value="P:amino acid biosynthetic process"/>
    <property type="evidence" value="ECO:0007669"/>
    <property type="project" value="UniProtKB-KW"/>
</dbReference>
<dbReference type="GO" id="GO:0009073">
    <property type="term" value="P:aromatic amino acid family biosynthetic process"/>
    <property type="evidence" value="ECO:0007669"/>
    <property type="project" value="UniProtKB-KW"/>
</dbReference>
<dbReference type="GO" id="GO:0009423">
    <property type="term" value="P:chorismate biosynthetic process"/>
    <property type="evidence" value="ECO:0007669"/>
    <property type="project" value="UniProtKB-UniRule"/>
</dbReference>
<dbReference type="CDD" id="cd08195">
    <property type="entry name" value="DHQS"/>
    <property type="match status" value="1"/>
</dbReference>
<dbReference type="FunFam" id="3.40.50.1970:FF:000001">
    <property type="entry name" value="3-dehydroquinate synthase"/>
    <property type="match status" value="1"/>
</dbReference>
<dbReference type="Gene3D" id="3.40.50.1970">
    <property type="match status" value="1"/>
</dbReference>
<dbReference type="Gene3D" id="1.20.1090.10">
    <property type="entry name" value="Dehydroquinate synthase-like - alpha domain"/>
    <property type="match status" value="1"/>
</dbReference>
<dbReference type="HAMAP" id="MF_00110">
    <property type="entry name" value="DHQ_synthase"/>
    <property type="match status" value="1"/>
</dbReference>
<dbReference type="InterPro" id="IPR050071">
    <property type="entry name" value="Dehydroquinate_synthase"/>
</dbReference>
<dbReference type="InterPro" id="IPR016037">
    <property type="entry name" value="DHQ_synth_AroB"/>
</dbReference>
<dbReference type="InterPro" id="IPR030963">
    <property type="entry name" value="DHQ_synth_fam"/>
</dbReference>
<dbReference type="InterPro" id="IPR030960">
    <property type="entry name" value="DHQS/DOIS_N"/>
</dbReference>
<dbReference type="InterPro" id="IPR056179">
    <property type="entry name" value="DHQS_C"/>
</dbReference>
<dbReference type="NCBIfam" id="TIGR01357">
    <property type="entry name" value="aroB"/>
    <property type="match status" value="1"/>
</dbReference>
<dbReference type="PANTHER" id="PTHR43622">
    <property type="entry name" value="3-DEHYDROQUINATE SYNTHASE"/>
    <property type="match status" value="1"/>
</dbReference>
<dbReference type="PANTHER" id="PTHR43622:SF7">
    <property type="entry name" value="3-DEHYDROQUINATE SYNTHASE, CHLOROPLASTIC"/>
    <property type="match status" value="1"/>
</dbReference>
<dbReference type="Pfam" id="PF01761">
    <property type="entry name" value="DHQ_synthase"/>
    <property type="match status" value="1"/>
</dbReference>
<dbReference type="Pfam" id="PF24621">
    <property type="entry name" value="DHQS_C"/>
    <property type="match status" value="1"/>
</dbReference>
<dbReference type="PIRSF" id="PIRSF001455">
    <property type="entry name" value="DHQ_synth"/>
    <property type="match status" value="1"/>
</dbReference>
<dbReference type="SUPFAM" id="SSF56796">
    <property type="entry name" value="Dehydroquinate synthase-like"/>
    <property type="match status" value="1"/>
</dbReference>
<feature type="chain" id="PRO_0000140712" description="3-dehydroquinate synthase">
    <location>
        <begin position="1"/>
        <end position="358"/>
    </location>
</feature>
<feature type="binding site" evidence="1">
    <location>
        <begin position="70"/>
        <end position="75"/>
    </location>
    <ligand>
        <name>NAD(+)</name>
        <dbReference type="ChEBI" id="CHEBI:57540"/>
    </ligand>
</feature>
<feature type="binding site" evidence="1">
    <location>
        <begin position="104"/>
        <end position="108"/>
    </location>
    <ligand>
        <name>NAD(+)</name>
        <dbReference type="ChEBI" id="CHEBI:57540"/>
    </ligand>
</feature>
<feature type="binding site" evidence="1">
    <location>
        <begin position="128"/>
        <end position="129"/>
    </location>
    <ligand>
        <name>NAD(+)</name>
        <dbReference type="ChEBI" id="CHEBI:57540"/>
    </ligand>
</feature>
<feature type="binding site" evidence="1">
    <location>
        <position position="141"/>
    </location>
    <ligand>
        <name>NAD(+)</name>
        <dbReference type="ChEBI" id="CHEBI:57540"/>
    </ligand>
</feature>
<feature type="binding site" evidence="1">
    <location>
        <position position="150"/>
    </location>
    <ligand>
        <name>NAD(+)</name>
        <dbReference type="ChEBI" id="CHEBI:57540"/>
    </ligand>
</feature>
<feature type="binding site" evidence="1">
    <location>
        <position position="183"/>
    </location>
    <ligand>
        <name>Zn(2+)</name>
        <dbReference type="ChEBI" id="CHEBI:29105"/>
    </ligand>
</feature>
<feature type="binding site" evidence="1">
    <location>
        <position position="246"/>
    </location>
    <ligand>
        <name>Zn(2+)</name>
        <dbReference type="ChEBI" id="CHEBI:29105"/>
    </ligand>
</feature>
<feature type="binding site" evidence="1">
    <location>
        <position position="263"/>
    </location>
    <ligand>
        <name>Zn(2+)</name>
        <dbReference type="ChEBI" id="CHEBI:29105"/>
    </ligand>
</feature>
<evidence type="ECO:0000255" key="1">
    <source>
        <dbReference type="HAMAP-Rule" id="MF_00110"/>
    </source>
</evidence>
<keyword id="KW-0028">Amino-acid biosynthesis</keyword>
<keyword id="KW-0057">Aromatic amino acid biosynthesis</keyword>
<keyword id="KW-0170">Cobalt</keyword>
<keyword id="KW-0963">Cytoplasm</keyword>
<keyword id="KW-0456">Lyase</keyword>
<keyword id="KW-0479">Metal-binding</keyword>
<keyword id="KW-0520">NAD</keyword>
<keyword id="KW-0547">Nucleotide-binding</keyword>
<keyword id="KW-0862">Zinc</keyword>
<sequence>MDVVEVATPGGSYPIHIGPGRLDALDASIPADATAIAVVTNPTVAGLYGARVEAALARTGKRVLRIELPDGEAHKDWQTLNLIFDALLENRLDRRAVLVALGGGVIGDMTGFAAAVYMRGIRFVQVPTTLLAQVDSSVGGKTAVNHPLGKNMIGAFYQPVAVEIDTEVLGTLPAREVSAGLAEVIKYGLILDAGFWQWCEDNVGALRALEPRALAYAIRRSCELKAQVVGQDERESGLRAILNLGHTFGHAIESGLGYGEWLHGEAVGCGMVQAAELSTLAAGFPAADVQRVRDLVREIGCPTVAPDLGAERWLALMQVDKKTEGGEIRFVLMPRIGQALSRAAPEADVRTALERTTR</sequence>
<comment type="function">
    <text evidence="1">Catalyzes the conversion of 3-deoxy-D-arabino-heptulosonate 7-phosphate (DAHP) to dehydroquinate (DHQ).</text>
</comment>
<comment type="catalytic activity">
    <reaction evidence="1">
        <text>7-phospho-2-dehydro-3-deoxy-D-arabino-heptonate = 3-dehydroquinate + phosphate</text>
        <dbReference type="Rhea" id="RHEA:21968"/>
        <dbReference type="ChEBI" id="CHEBI:32364"/>
        <dbReference type="ChEBI" id="CHEBI:43474"/>
        <dbReference type="ChEBI" id="CHEBI:58394"/>
        <dbReference type="EC" id="4.2.3.4"/>
    </reaction>
</comment>
<comment type="cofactor">
    <cofactor evidence="1">
        <name>NAD(+)</name>
        <dbReference type="ChEBI" id="CHEBI:57540"/>
    </cofactor>
</comment>
<comment type="cofactor">
    <cofactor evidence="1">
        <name>Co(2+)</name>
        <dbReference type="ChEBI" id="CHEBI:48828"/>
    </cofactor>
    <cofactor evidence="1">
        <name>Zn(2+)</name>
        <dbReference type="ChEBI" id="CHEBI:29105"/>
    </cofactor>
    <text evidence="1">Binds 1 divalent metal cation per subunit. Can use either Co(2+) or Zn(2+).</text>
</comment>
<comment type="pathway">
    <text evidence="1">Metabolic intermediate biosynthesis; chorismate biosynthesis; chorismate from D-erythrose 4-phosphate and phosphoenolpyruvate: step 2/7.</text>
</comment>
<comment type="subcellular location">
    <subcellularLocation>
        <location evidence="1">Cytoplasm</location>
    </subcellularLocation>
</comment>
<comment type="similarity">
    <text evidence="1">Belongs to the sugar phosphate cyclases superfamily. Dehydroquinate synthase family.</text>
</comment>
<name>AROB_BORPA</name>
<protein>
    <recommendedName>
        <fullName evidence="1">3-dehydroquinate synthase</fullName>
        <shortName evidence="1">DHQS</shortName>
        <ecNumber evidence="1">4.2.3.4</ecNumber>
    </recommendedName>
</protein>
<accession>Q7W2B6</accession>
<reference key="1">
    <citation type="journal article" date="2003" name="Nat. Genet.">
        <title>Comparative analysis of the genome sequences of Bordetella pertussis, Bordetella parapertussis and Bordetella bronchiseptica.</title>
        <authorList>
            <person name="Parkhill J."/>
            <person name="Sebaihia M."/>
            <person name="Preston A."/>
            <person name="Murphy L.D."/>
            <person name="Thomson N.R."/>
            <person name="Harris D.E."/>
            <person name="Holden M.T.G."/>
            <person name="Churcher C.M."/>
            <person name="Bentley S.D."/>
            <person name="Mungall K.L."/>
            <person name="Cerdeno-Tarraga A.-M."/>
            <person name="Temple L."/>
            <person name="James K.D."/>
            <person name="Harris B."/>
            <person name="Quail M.A."/>
            <person name="Achtman M."/>
            <person name="Atkin R."/>
            <person name="Baker S."/>
            <person name="Basham D."/>
            <person name="Bason N."/>
            <person name="Cherevach I."/>
            <person name="Chillingworth T."/>
            <person name="Collins M."/>
            <person name="Cronin A."/>
            <person name="Davis P."/>
            <person name="Doggett J."/>
            <person name="Feltwell T."/>
            <person name="Goble A."/>
            <person name="Hamlin N."/>
            <person name="Hauser H."/>
            <person name="Holroyd S."/>
            <person name="Jagels K."/>
            <person name="Leather S."/>
            <person name="Moule S."/>
            <person name="Norberczak H."/>
            <person name="O'Neil S."/>
            <person name="Ormond D."/>
            <person name="Price C."/>
            <person name="Rabbinowitsch E."/>
            <person name="Rutter S."/>
            <person name="Sanders M."/>
            <person name="Saunders D."/>
            <person name="Seeger K."/>
            <person name="Sharp S."/>
            <person name="Simmonds M."/>
            <person name="Skelton J."/>
            <person name="Squares R."/>
            <person name="Squares S."/>
            <person name="Stevens K."/>
            <person name="Unwin L."/>
            <person name="Whitehead S."/>
            <person name="Barrell B.G."/>
            <person name="Maskell D.J."/>
        </authorList>
    </citation>
    <scope>NUCLEOTIDE SEQUENCE [LARGE SCALE GENOMIC DNA]</scope>
    <source>
        <strain>12822 / ATCC BAA-587 / NCTC 13253</strain>
    </source>
</reference>
<organism>
    <name type="scientific">Bordetella parapertussis (strain 12822 / ATCC BAA-587 / NCTC 13253)</name>
    <dbReference type="NCBI Taxonomy" id="257311"/>
    <lineage>
        <taxon>Bacteria</taxon>
        <taxon>Pseudomonadati</taxon>
        <taxon>Pseudomonadota</taxon>
        <taxon>Betaproteobacteria</taxon>
        <taxon>Burkholderiales</taxon>
        <taxon>Alcaligenaceae</taxon>
        <taxon>Bordetella</taxon>
    </lineage>
</organism>
<gene>
    <name evidence="1" type="primary">aroB</name>
    <name type="ordered locus">BPP0072</name>
</gene>